<dbReference type="EC" id="4.1.3.27"/>
<dbReference type="EC" id="4.1.1.48"/>
<dbReference type="EC" id="5.3.1.24"/>
<dbReference type="EMBL" id="Y09137">
    <property type="protein sequence ID" value="CAA70348.1"/>
    <property type="molecule type" value="mRNA"/>
</dbReference>
<dbReference type="EMBL" id="CU329671">
    <property type="protein sequence ID" value="CAB51341.1"/>
    <property type="molecule type" value="Genomic_DNA"/>
</dbReference>
<dbReference type="PIR" id="T39468">
    <property type="entry name" value="T39468"/>
</dbReference>
<dbReference type="PIR" id="T46566">
    <property type="entry name" value="T46566"/>
</dbReference>
<dbReference type="RefSeq" id="NP_596823.1">
    <property type="nucleotide sequence ID" value="NM_001023843.1"/>
</dbReference>
<dbReference type="SMR" id="Q92370"/>
<dbReference type="BioGRID" id="276517">
    <property type="interactions" value="5"/>
</dbReference>
<dbReference type="FunCoup" id="Q92370">
    <property type="interactions" value="106"/>
</dbReference>
<dbReference type="STRING" id="284812.Q92370"/>
<dbReference type="MEROPS" id="C26.A25"/>
<dbReference type="iPTMnet" id="Q92370"/>
<dbReference type="PaxDb" id="4896-SPBC1539.09c.1"/>
<dbReference type="EnsemblFungi" id="SPBC1539.09c.1">
    <property type="protein sequence ID" value="SPBC1539.09c.1:pep"/>
    <property type="gene ID" value="SPBC1539.09c"/>
</dbReference>
<dbReference type="GeneID" id="2539973"/>
<dbReference type="KEGG" id="spo:2539973"/>
<dbReference type="PomBase" id="SPBC1539.09c">
    <property type="gene designation" value="trp1"/>
</dbReference>
<dbReference type="VEuPathDB" id="FungiDB:SPBC1539.09c"/>
<dbReference type="eggNOG" id="KOG0026">
    <property type="taxonomic scope" value="Eukaryota"/>
</dbReference>
<dbReference type="eggNOG" id="KOG4201">
    <property type="taxonomic scope" value="Eukaryota"/>
</dbReference>
<dbReference type="eggNOG" id="KOG4202">
    <property type="taxonomic scope" value="Eukaryota"/>
</dbReference>
<dbReference type="HOGENOM" id="CLU_007713_2_0_1"/>
<dbReference type="InParanoid" id="Q92370"/>
<dbReference type="OMA" id="EPIEWAN"/>
<dbReference type="PhylomeDB" id="Q92370"/>
<dbReference type="UniPathway" id="UPA00035">
    <property type="reaction ID" value="UER00040"/>
</dbReference>
<dbReference type="UniPathway" id="UPA00035">
    <property type="reaction ID" value="UER00042"/>
</dbReference>
<dbReference type="UniPathway" id="UPA00035">
    <property type="reaction ID" value="UER00043"/>
</dbReference>
<dbReference type="PRO" id="PR:Q92370"/>
<dbReference type="Proteomes" id="UP000002485">
    <property type="component" value="Chromosome II"/>
</dbReference>
<dbReference type="GO" id="GO:0005950">
    <property type="term" value="C:anthranilate synthase complex"/>
    <property type="evidence" value="ECO:0000266"/>
    <property type="project" value="PomBase"/>
</dbReference>
<dbReference type="GO" id="GO:0005829">
    <property type="term" value="C:cytosol"/>
    <property type="evidence" value="ECO:0007005"/>
    <property type="project" value="PomBase"/>
</dbReference>
<dbReference type="GO" id="GO:0004049">
    <property type="term" value="F:anthranilate synthase activity"/>
    <property type="evidence" value="ECO:0007669"/>
    <property type="project" value="UniProtKB-EC"/>
</dbReference>
<dbReference type="GO" id="GO:0004425">
    <property type="term" value="F:indole-3-glycerol-phosphate synthase activity"/>
    <property type="evidence" value="ECO:0000315"/>
    <property type="project" value="PomBase"/>
</dbReference>
<dbReference type="GO" id="GO:0004640">
    <property type="term" value="F:phosphoribosylanthranilate isomerase activity"/>
    <property type="evidence" value="ECO:0000315"/>
    <property type="project" value="PomBase"/>
</dbReference>
<dbReference type="GO" id="GO:0000162">
    <property type="term" value="P:L-tryptophan biosynthetic process"/>
    <property type="evidence" value="ECO:0000315"/>
    <property type="project" value="PomBase"/>
</dbReference>
<dbReference type="CDD" id="cd01743">
    <property type="entry name" value="GATase1_Anthranilate_Synthase"/>
    <property type="match status" value="1"/>
</dbReference>
<dbReference type="CDD" id="cd00331">
    <property type="entry name" value="IGPS"/>
    <property type="match status" value="1"/>
</dbReference>
<dbReference type="CDD" id="cd00405">
    <property type="entry name" value="PRAI"/>
    <property type="match status" value="1"/>
</dbReference>
<dbReference type="FunFam" id="3.20.20.70:FF:000136">
    <property type="entry name" value="Multifunctional tryptophan biosynthesis protein"/>
    <property type="match status" value="1"/>
</dbReference>
<dbReference type="FunFam" id="3.40.50.880:FF:000031">
    <property type="entry name" value="Multifunctional tryptophan biosynthesis protein"/>
    <property type="match status" value="1"/>
</dbReference>
<dbReference type="Gene3D" id="3.40.50.880">
    <property type="match status" value="1"/>
</dbReference>
<dbReference type="Gene3D" id="3.20.20.70">
    <property type="entry name" value="Aldolase class I"/>
    <property type="match status" value="2"/>
</dbReference>
<dbReference type="HAMAP" id="MF_00134_B">
    <property type="entry name" value="IGPS_B"/>
    <property type="match status" value="1"/>
</dbReference>
<dbReference type="HAMAP" id="MF_00135">
    <property type="entry name" value="PRAI"/>
    <property type="match status" value="1"/>
</dbReference>
<dbReference type="InterPro" id="IPR013785">
    <property type="entry name" value="Aldolase_TIM"/>
</dbReference>
<dbReference type="InterPro" id="IPR016302">
    <property type="entry name" value="Anthranilate_synth_II"/>
</dbReference>
<dbReference type="InterPro" id="IPR029062">
    <property type="entry name" value="Class_I_gatase-like"/>
</dbReference>
<dbReference type="InterPro" id="IPR017926">
    <property type="entry name" value="GATASE"/>
</dbReference>
<dbReference type="InterPro" id="IPR045186">
    <property type="entry name" value="Indole-3-glycerol_P_synth"/>
</dbReference>
<dbReference type="InterPro" id="IPR013798">
    <property type="entry name" value="Indole-3-glycerol_P_synth_dom"/>
</dbReference>
<dbReference type="InterPro" id="IPR001468">
    <property type="entry name" value="Indole-3-GlycerolPSynthase_CS"/>
</dbReference>
<dbReference type="InterPro" id="IPR001240">
    <property type="entry name" value="PRAI_dom"/>
</dbReference>
<dbReference type="InterPro" id="IPR011060">
    <property type="entry name" value="RibuloseP-bd_barrel"/>
</dbReference>
<dbReference type="InterPro" id="IPR006221">
    <property type="entry name" value="TrpG/PapA_dom"/>
</dbReference>
<dbReference type="NCBIfam" id="NF001377">
    <property type="entry name" value="PRK00278.2-4"/>
    <property type="match status" value="1"/>
</dbReference>
<dbReference type="NCBIfam" id="TIGR00566">
    <property type="entry name" value="trpG_papA"/>
    <property type="match status" value="1"/>
</dbReference>
<dbReference type="PANTHER" id="PTHR22854:SF2">
    <property type="entry name" value="INDOLE-3-GLYCEROL-PHOSPHATE SYNTHASE"/>
    <property type="match status" value="1"/>
</dbReference>
<dbReference type="PANTHER" id="PTHR22854">
    <property type="entry name" value="TRYPTOPHAN BIOSYNTHESIS PROTEIN"/>
    <property type="match status" value="1"/>
</dbReference>
<dbReference type="Pfam" id="PF00117">
    <property type="entry name" value="GATase"/>
    <property type="match status" value="1"/>
</dbReference>
<dbReference type="Pfam" id="PF00218">
    <property type="entry name" value="IGPS"/>
    <property type="match status" value="1"/>
</dbReference>
<dbReference type="Pfam" id="PF00697">
    <property type="entry name" value="PRAI"/>
    <property type="match status" value="1"/>
</dbReference>
<dbReference type="PIRSF" id="PIRSF001382">
    <property type="entry name" value="TrpG-trpC-trpF"/>
    <property type="match status" value="1"/>
</dbReference>
<dbReference type="PRINTS" id="PR00097">
    <property type="entry name" value="ANTSNTHASEII"/>
</dbReference>
<dbReference type="PRINTS" id="PR00096">
    <property type="entry name" value="GATASE"/>
</dbReference>
<dbReference type="SUPFAM" id="SSF52317">
    <property type="entry name" value="Class I glutamine amidotransferase-like"/>
    <property type="match status" value="1"/>
</dbReference>
<dbReference type="SUPFAM" id="SSF51366">
    <property type="entry name" value="Ribulose-phoshate binding barrel"/>
    <property type="match status" value="2"/>
</dbReference>
<dbReference type="PROSITE" id="PS51273">
    <property type="entry name" value="GATASE_TYPE_1"/>
    <property type="match status" value="1"/>
</dbReference>
<dbReference type="PROSITE" id="PS00614">
    <property type="entry name" value="IGPS"/>
    <property type="match status" value="1"/>
</dbReference>
<evidence type="ECO:0000250" key="1"/>
<evidence type="ECO:0000250" key="2">
    <source>
        <dbReference type="UniProtKB" id="P00900"/>
    </source>
</evidence>
<evidence type="ECO:0000305" key="3"/>
<sequence>MSEKVDVGESVKGDASENAVKEVAERPIVMIDNYDSFTWNVVQYLSNLEKRYPIMVFRNDEITVDELEKLNPLKLVLSPGPGHPARDGGICNEAISRFAGKIPILGVCMGLQCIFETMGGKVDSAGEIIHGKVSKINHDGLGFYQGIPQNISVTRYHSLAGKISSLPDCLDVTSWTENGVIMGARHKKYAIEGVQYHPESILSEYGKEYIQNFLNLTAGTWEENGIVMPTKNNAFNAAMRENSNSVSSTKIRKQESILEKIHAQRLIDIAESKRKPGLSVGDLQTYLNLNIAPPCINFYERLKQSKPALMAEVKRASPSKGDIKLDANAAIQALTYAQVGASVISVLTEPKWFKGSLNDLFVARKAVEHVANRPAILRKDFIIDPYQIMEARLNGADSVLLIVAMLSREQLESLYKFSKSLGMEPLVEVNCAEEMKTAIELGAKVIGVNNRNLHSFEVDLSTTSKLAEMVPDDVILAALSGISSPADVAHYSSQGVSAVLVGESLMRASDPAAFARELLNLSSSEISNGKKTSTPLVKVCGTRSLLAAKTIVESGGDLIGLIFVEKSKRKVDLSVAKEISHFVHTTNRKHISPKKAVTGQSWFDHQYENLASSPHPLLVGVFQNQPLEYIRSIIAEVNLDIVQLHGQEPFEWIHMLDRPVIKVFPLNSSEISRPNYHIVPLIDAYVGGESGGLGKKVDWEAASFIPVSYVLAGGLTPKNVQDAISVSRPAVVDVSSGVETDGKQDLEKIKAFINAVKEL</sequence>
<gene>
    <name type="primary">trp1</name>
    <name type="ORF">SPBC1539.09c</name>
</gene>
<feature type="chain" id="PRO_0000056865" description="Multifunctional tryptophan biosynthesis protein">
    <location>
        <begin position="1"/>
        <end position="759"/>
    </location>
</feature>
<feature type="domain" description="Glutamine amidotransferase type-1">
    <location>
        <begin position="27"/>
        <end position="223"/>
    </location>
</feature>
<feature type="region of interest" description="Indole-3-glycerol phosphate synthase">
    <location>
        <begin position="257"/>
        <end position="519"/>
    </location>
</feature>
<feature type="region of interest" description="N-(5'-phosphoribosyl)anthranilate isomerase">
    <location>
        <begin position="536"/>
        <end position="759"/>
    </location>
</feature>
<feature type="active site" description="Nucleophile; for GATase activity" evidence="2">
    <location>
        <position position="108"/>
    </location>
</feature>
<feature type="active site" description="For GATase activity" evidence="1">
    <location>
        <position position="197"/>
    </location>
</feature>
<feature type="active site" description="For GATase activity" evidence="1">
    <location>
        <position position="199"/>
    </location>
</feature>
<feature type="binding site" evidence="2">
    <location>
        <begin position="80"/>
        <end position="82"/>
    </location>
    <ligand>
        <name>L-glutamine</name>
        <dbReference type="ChEBI" id="CHEBI:58359"/>
    </ligand>
</feature>
<feature type="binding site" evidence="2">
    <location>
        <position position="112"/>
    </location>
    <ligand>
        <name>L-glutamine</name>
        <dbReference type="ChEBI" id="CHEBI:58359"/>
    </ligand>
</feature>
<feature type="binding site" evidence="2">
    <location>
        <begin position="158"/>
        <end position="159"/>
    </location>
    <ligand>
        <name>L-glutamine</name>
        <dbReference type="ChEBI" id="CHEBI:58359"/>
    </ligand>
</feature>
<feature type="sequence conflict" description="In Ref. 1; CAA70348." evidence="3" ref="1">
    <original>Q</original>
    <variation>E</variation>
    <location>
        <position position="387"/>
    </location>
</feature>
<organism>
    <name type="scientific">Schizosaccharomyces pombe (strain 972 / ATCC 24843)</name>
    <name type="common">Fission yeast</name>
    <dbReference type="NCBI Taxonomy" id="284812"/>
    <lineage>
        <taxon>Eukaryota</taxon>
        <taxon>Fungi</taxon>
        <taxon>Dikarya</taxon>
        <taxon>Ascomycota</taxon>
        <taxon>Taphrinomycotina</taxon>
        <taxon>Schizosaccharomycetes</taxon>
        <taxon>Schizosaccharomycetales</taxon>
        <taxon>Schizosaccharomycetaceae</taxon>
        <taxon>Schizosaccharomyces</taxon>
    </lineage>
</organism>
<name>TRPG_SCHPO</name>
<accession>Q92370</accession>
<accession>Q9UUF5</accession>
<reference key="1">
    <citation type="submission" date="1996-11" db="EMBL/GenBank/DDBJ databases">
        <authorList>
            <person name="David C."/>
            <person name="Couzin N."/>
            <person name="Lauquin G.J.-M."/>
        </authorList>
    </citation>
    <scope>NUCLEOTIDE SEQUENCE [MRNA]</scope>
    <source>
        <strain>972 / ATCC 24843</strain>
    </source>
</reference>
<reference key="2">
    <citation type="journal article" date="2002" name="Nature">
        <title>The genome sequence of Schizosaccharomyces pombe.</title>
        <authorList>
            <person name="Wood V."/>
            <person name="Gwilliam R."/>
            <person name="Rajandream M.A."/>
            <person name="Lyne M.H."/>
            <person name="Lyne R."/>
            <person name="Stewart A."/>
            <person name="Sgouros J.G."/>
            <person name="Peat N."/>
            <person name="Hayles J."/>
            <person name="Baker S.G."/>
            <person name="Basham D."/>
            <person name="Bowman S."/>
            <person name="Brooks K."/>
            <person name="Brown D."/>
            <person name="Brown S."/>
            <person name="Chillingworth T."/>
            <person name="Churcher C.M."/>
            <person name="Collins M."/>
            <person name="Connor R."/>
            <person name="Cronin A."/>
            <person name="Davis P."/>
            <person name="Feltwell T."/>
            <person name="Fraser A."/>
            <person name="Gentles S."/>
            <person name="Goble A."/>
            <person name="Hamlin N."/>
            <person name="Harris D.E."/>
            <person name="Hidalgo J."/>
            <person name="Hodgson G."/>
            <person name="Holroyd S."/>
            <person name="Hornsby T."/>
            <person name="Howarth S."/>
            <person name="Huckle E.J."/>
            <person name="Hunt S."/>
            <person name="Jagels K."/>
            <person name="James K.D."/>
            <person name="Jones L."/>
            <person name="Jones M."/>
            <person name="Leather S."/>
            <person name="McDonald S."/>
            <person name="McLean J."/>
            <person name="Mooney P."/>
            <person name="Moule S."/>
            <person name="Mungall K.L."/>
            <person name="Murphy L.D."/>
            <person name="Niblett D."/>
            <person name="Odell C."/>
            <person name="Oliver K."/>
            <person name="O'Neil S."/>
            <person name="Pearson D."/>
            <person name="Quail M.A."/>
            <person name="Rabbinowitsch E."/>
            <person name="Rutherford K.M."/>
            <person name="Rutter S."/>
            <person name="Saunders D."/>
            <person name="Seeger K."/>
            <person name="Sharp S."/>
            <person name="Skelton J."/>
            <person name="Simmonds M.N."/>
            <person name="Squares R."/>
            <person name="Squares S."/>
            <person name="Stevens K."/>
            <person name="Taylor K."/>
            <person name="Taylor R.G."/>
            <person name="Tivey A."/>
            <person name="Walsh S.V."/>
            <person name="Warren T."/>
            <person name="Whitehead S."/>
            <person name="Woodward J.R."/>
            <person name="Volckaert G."/>
            <person name="Aert R."/>
            <person name="Robben J."/>
            <person name="Grymonprez B."/>
            <person name="Weltjens I."/>
            <person name="Vanstreels E."/>
            <person name="Rieger M."/>
            <person name="Schaefer M."/>
            <person name="Mueller-Auer S."/>
            <person name="Gabel C."/>
            <person name="Fuchs M."/>
            <person name="Duesterhoeft A."/>
            <person name="Fritzc C."/>
            <person name="Holzer E."/>
            <person name="Moestl D."/>
            <person name="Hilbert H."/>
            <person name="Borzym K."/>
            <person name="Langer I."/>
            <person name="Beck A."/>
            <person name="Lehrach H."/>
            <person name="Reinhardt R."/>
            <person name="Pohl T.M."/>
            <person name="Eger P."/>
            <person name="Zimmermann W."/>
            <person name="Wedler H."/>
            <person name="Wambutt R."/>
            <person name="Purnelle B."/>
            <person name="Goffeau A."/>
            <person name="Cadieu E."/>
            <person name="Dreano S."/>
            <person name="Gloux S."/>
            <person name="Lelaure V."/>
            <person name="Mottier S."/>
            <person name="Galibert F."/>
            <person name="Aves S.J."/>
            <person name="Xiang Z."/>
            <person name="Hunt C."/>
            <person name="Moore K."/>
            <person name="Hurst S.M."/>
            <person name="Lucas M."/>
            <person name="Rochet M."/>
            <person name="Gaillardin C."/>
            <person name="Tallada V.A."/>
            <person name="Garzon A."/>
            <person name="Thode G."/>
            <person name="Daga R.R."/>
            <person name="Cruzado L."/>
            <person name="Jimenez J."/>
            <person name="Sanchez M."/>
            <person name="del Rey F."/>
            <person name="Benito J."/>
            <person name="Dominguez A."/>
            <person name="Revuelta J.L."/>
            <person name="Moreno S."/>
            <person name="Armstrong J."/>
            <person name="Forsburg S.L."/>
            <person name="Cerutti L."/>
            <person name="Lowe T."/>
            <person name="McCombie W.R."/>
            <person name="Paulsen I."/>
            <person name="Potashkin J."/>
            <person name="Shpakovski G.V."/>
            <person name="Ussery D."/>
            <person name="Barrell B.G."/>
            <person name="Nurse P."/>
        </authorList>
    </citation>
    <scope>NUCLEOTIDE SEQUENCE [LARGE SCALE GENOMIC DNA]</scope>
    <source>
        <strain>972 / ATCC 24843</strain>
    </source>
</reference>
<protein>
    <recommendedName>
        <fullName>Multifunctional tryptophan biosynthesis protein</fullName>
    </recommendedName>
    <domain>
        <recommendedName>
            <fullName>Anthranilate synthase component 2</fullName>
            <shortName>AS</shortName>
            <ecNumber>4.1.3.27</ecNumber>
        </recommendedName>
        <alternativeName>
            <fullName>Anthranilate synthase, glutamine amidotransferase component</fullName>
        </alternativeName>
    </domain>
    <domain>
        <recommendedName>
            <fullName>Indole-3-glycerol phosphate synthase</fullName>
            <shortName>IGPS</shortName>
            <ecNumber>4.1.1.48</ecNumber>
        </recommendedName>
    </domain>
    <domain>
        <recommendedName>
            <fullName>N-(5'-phosphoribosyl)anthranilate isomerase</fullName>
            <shortName>PRAI</shortName>
            <ecNumber>5.3.1.24</ecNumber>
        </recommendedName>
    </domain>
</protein>
<keyword id="KW-0028">Amino-acid biosynthesis</keyword>
<keyword id="KW-0057">Aromatic amino acid biosynthesis</keyword>
<keyword id="KW-0210">Decarboxylase</keyword>
<keyword id="KW-0315">Glutamine amidotransferase</keyword>
<keyword id="KW-0413">Isomerase</keyword>
<keyword id="KW-0456">Lyase</keyword>
<keyword id="KW-0511">Multifunctional enzyme</keyword>
<keyword id="KW-1185">Reference proteome</keyword>
<keyword id="KW-0822">Tryptophan biosynthesis</keyword>
<comment type="function">
    <text>Trifunctional enzyme bearing the Gln amidotransferase (GATase) domain of anthranilate synthase, indole-glycerolphosphate synthase, and phosphoribosylanthranilate isomerase activities.</text>
</comment>
<comment type="catalytic activity">
    <reaction>
        <text>N-(5-phospho-beta-D-ribosyl)anthranilate = 1-(2-carboxyphenylamino)-1-deoxy-D-ribulose 5-phosphate</text>
        <dbReference type="Rhea" id="RHEA:21540"/>
        <dbReference type="ChEBI" id="CHEBI:18277"/>
        <dbReference type="ChEBI" id="CHEBI:58613"/>
        <dbReference type="EC" id="5.3.1.24"/>
    </reaction>
</comment>
<comment type="catalytic activity">
    <reaction>
        <text>1-(2-carboxyphenylamino)-1-deoxy-D-ribulose 5-phosphate + H(+) = (1S,2R)-1-C-(indol-3-yl)glycerol 3-phosphate + CO2 + H2O</text>
        <dbReference type="Rhea" id="RHEA:23476"/>
        <dbReference type="ChEBI" id="CHEBI:15377"/>
        <dbReference type="ChEBI" id="CHEBI:15378"/>
        <dbReference type="ChEBI" id="CHEBI:16526"/>
        <dbReference type="ChEBI" id="CHEBI:58613"/>
        <dbReference type="ChEBI" id="CHEBI:58866"/>
        <dbReference type="EC" id="4.1.1.48"/>
    </reaction>
</comment>
<comment type="catalytic activity">
    <reaction>
        <text>chorismate + L-glutamine = anthranilate + pyruvate + L-glutamate + H(+)</text>
        <dbReference type="Rhea" id="RHEA:21732"/>
        <dbReference type="ChEBI" id="CHEBI:15361"/>
        <dbReference type="ChEBI" id="CHEBI:15378"/>
        <dbReference type="ChEBI" id="CHEBI:16567"/>
        <dbReference type="ChEBI" id="CHEBI:29748"/>
        <dbReference type="ChEBI" id="CHEBI:29985"/>
        <dbReference type="ChEBI" id="CHEBI:58359"/>
        <dbReference type="EC" id="4.1.3.27"/>
    </reaction>
</comment>
<comment type="pathway">
    <text>Amino-acid biosynthesis; L-tryptophan biosynthesis; L-tryptophan from chorismate: step 1/5.</text>
</comment>
<comment type="pathway">
    <text>Amino-acid biosynthesis; L-tryptophan biosynthesis; L-tryptophan from chorismate: step 3/5.</text>
</comment>
<comment type="pathway">
    <text>Amino-acid biosynthesis; L-tryptophan biosynthesis; L-tryptophan from chorismate: step 4/5.</text>
</comment>
<proteinExistence type="evidence at transcript level"/>